<sequence length="159" mass="17568">MIEGVMKEGFITTSYDSVVNWAKTGSLWPMTFGLACCAVEMMHAAAARYDIGRFGAEVFRASPRQSDLMIVAGTLCNKMAPALRKVYDQMSEPRWVISMGSCANGGGYYHYSYSVVRGCDRIVPVDVYVPGCPPTAEALIYGIIQLQQKIRRTHTIARV</sequence>
<keyword id="KW-0004">4Fe-4S</keyword>
<keyword id="KW-0997">Cell inner membrane</keyword>
<keyword id="KW-1003">Cell membrane</keyword>
<keyword id="KW-0408">Iron</keyword>
<keyword id="KW-0411">Iron-sulfur</keyword>
<keyword id="KW-0472">Membrane</keyword>
<keyword id="KW-0479">Metal-binding</keyword>
<keyword id="KW-0520">NAD</keyword>
<keyword id="KW-0874">Quinone</keyword>
<keyword id="KW-1278">Translocase</keyword>
<keyword id="KW-0813">Transport</keyword>
<keyword id="KW-0830">Ubiquinone</keyword>
<proteinExistence type="inferred from homology"/>
<gene>
    <name evidence="2" type="primary">nuoB</name>
    <name type="ordered locus">Aave_1264</name>
</gene>
<evidence type="ECO:0000250" key="1"/>
<evidence type="ECO:0000255" key="2">
    <source>
        <dbReference type="HAMAP-Rule" id="MF_01356"/>
    </source>
</evidence>
<feature type="chain" id="PRO_0000358339" description="NADH-quinone oxidoreductase subunit B">
    <location>
        <begin position="1"/>
        <end position="159"/>
    </location>
</feature>
<feature type="binding site" evidence="2">
    <location>
        <position position="36"/>
    </location>
    <ligand>
        <name>[4Fe-4S] cluster</name>
        <dbReference type="ChEBI" id="CHEBI:49883"/>
    </ligand>
</feature>
<feature type="binding site" evidence="2">
    <location>
        <position position="37"/>
    </location>
    <ligand>
        <name>[4Fe-4S] cluster</name>
        <dbReference type="ChEBI" id="CHEBI:49883"/>
    </ligand>
</feature>
<feature type="binding site" evidence="2">
    <location>
        <position position="102"/>
    </location>
    <ligand>
        <name>[4Fe-4S] cluster</name>
        <dbReference type="ChEBI" id="CHEBI:49883"/>
    </ligand>
</feature>
<feature type="binding site" evidence="2">
    <location>
        <position position="132"/>
    </location>
    <ligand>
        <name>[4Fe-4S] cluster</name>
        <dbReference type="ChEBI" id="CHEBI:49883"/>
    </ligand>
</feature>
<accession>A1TLL7</accession>
<dbReference type="EC" id="7.1.1.-" evidence="2"/>
<dbReference type="EMBL" id="CP000512">
    <property type="protein sequence ID" value="ABM31855.1"/>
    <property type="molecule type" value="Genomic_DNA"/>
</dbReference>
<dbReference type="RefSeq" id="WP_011794407.1">
    <property type="nucleotide sequence ID" value="NC_008752.1"/>
</dbReference>
<dbReference type="SMR" id="A1TLL7"/>
<dbReference type="STRING" id="397945.Aave_1264"/>
<dbReference type="KEGG" id="aav:Aave_1264"/>
<dbReference type="eggNOG" id="COG0377">
    <property type="taxonomic scope" value="Bacteria"/>
</dbReference>
<dbReference type="HOGENOM" id="CLU_055737_7_3_4"/>
<dbReference type="OrthoDB" id="9786737at2"/>
<dbReference type="Proteomes" id="UP000002596">
    <property type="component" value="Chromosome"/>
</dbReference>
<dbReference type="GO" id="GO:0005886">
    <property type="term" value="C:plasma membrane"/>
    <property type="evidence" value="ECO:0007669"/>
    <property type="project" value="UniProtKB-SubCell"/>
</dbReference>
<dbReference type="GO" id="GO:0045271">
    <property type="term" value="C:respiratory chain complex I"/>
    <property type="evidence" value="ECO:0007669"/>
    <property type="project" value="TreeGrafter"/>
</dbReference>
<dbReference type="GO" id="GO:0051539">
    <property type="term" value="F:4 iron, 4 sulfur cluster binding"/>
    <property type="evidence" value="ECO:0007669"/>
    <property type="project" value="UniProtKB-KW"/>
</dbReference>
<dbReference type="GO" id="GO:0005506">
    <property type="term" value="F:iron ion binding"/>
    <property type="evidence" value="ECO:0007669"/>
    <property type="project" value="UniProtKB-UniRule"/>
</dbReference>
<dbReference type="GO" id="GO:0008137">
    <property type="term" value="F:NADH dehydrogenase (ubiquinone) activity"/>
    <property type="evidence" value="ECO:0007669"/>
    <property type="project" value="InterPro"/>
</dbReference>
<dbReference type="GO" id="GO:0050136">
    <property type="term" value="F:NADH:ubiquinone reductase (non-electrogenic) activity"/>
    <property type="evidence" value="ECO:0007669"/>
    <property type="project" value="UniProtKB-UniRule"/>
</dbReference>
<dbReference type="GO" id="GO:0048038">
    <property type="term" value="F:quinone binding"/>
    <property type="evidence" value="ECO:0007669"/>
    <property type="project" value="UniProtKB-KW"/>
</dbReference>
<dbReference type="GO" id="GO:0009060">
    <property type="term" value="P:aerobic respiration"/>
    <property type="evidence" value="ECO:0007669"/>
    <property type="project" value="TreeGrafter"/>
</dbReference>
<dbReference type="GO" id="GO:0015990">
    <property type="term" value="P:electron transport coupled proton transport"/>
    <property type="evidence" value="ECO:0007669"/>
    <property type="project" value="TreeGrafter"/>
</dbReference>
<dbReference type="FunFam" id="3.40.50.12280:FF:000001">
    <property type="entry name" value="NADH-quinone oxidoreductase subunit B 2"/>
    <property type="match status" value="1"/>
</dbReference>
<dbReference type="Gene3D" id="3.40.50.12280">
    <property type="match status" value="1"/>
</dbReference>
<dbReference type="HAMAP" id="MF_01356">
    <property type="entry name" value="NDH1_NuoB"/>
    <property type="match status" value="1"/>
</dbReference>
<dbReference type="InterPro" id="IPR006137">
    <property type="entry name" value="NADH_UbQ_OxRdtase-like_20kDa"/>
</dbReference>
<dbReference type="InterPro" id="IPR006138">
    <property type="entry name" value="NADH_UQ_OxRdtase_20Kd_su"/>
</dbReference>
<dbReference type="NCBIfam" id="TIGR01957">
    <property type="entry name" value="nuoB_fam"/>
    <property type="match status" value="1"/>
</dbReference>
<dbReference type="NCBIfam" id="NF005012">
    <property type="entry name" value="PRK06411.1"/>
    <property type="match status" value="1"/>
</dbReference>
<dbReference type="PANTHER" id="PTHR11995">
    <property type="entry name" value="NADH DEHYDROGENASE"/>
    <property type="match status" value="1"/>
</dbReference>
<dbReference type="PANTHER" id="PTHR11995:SF14">
    <property type="entry name" value="NADH DEHYDROGENASE [UBIQUINONE] IRON-SULFUR PROTEIN 7, MITOCHONDRIAL"/>
    <property type="match status" value="1"/>
</dbReference>
<dbReference type="Pfam" id="PF01058">
    <property type="entry name" value="Oxidored_q6"/>
    <property type="match status" value="1"/>
</dbReference>
<dbReference type="SUPFAM" id="SSF56770">
    <property type="entry name" value="HydA/Nqo6-like"/>
    <property type="match status" value="1"/>
</dbReference>
<dbReference type="PROSITE" id="PS01150">
    <property type="entry name" value="COMPLEX1_20K"/>
    <property type="match status" value="1"/>
</dbReference>
<name>NUOB_PARC0</name>
<reference key="1">
    <citation type="submission" date="2006-12" db="EMBL/GenBank/DDBJ databases">
        <title>Complete sequence of Acidovorax avenae subsp. citrulli AAC00-1.</title>
        <authorList>
            <person name="Copeland A."/>
            <person name="Lucas S."/>
            <person name="Lapidus A."/>
            <person name="Barry K."/>
            <person name="Detter J.C."/>
            <person name="Glavina del Rio T."/>
            <person name="Dalin E."/>
            <person name="Tice H."/>
            <person name="Pitluck S."/>
            <person name="Kiss H."/>
            <person name="Brettin T."/>
            <person name="Bruce D."/>
            <person name="Han C."/>
            <person name="Tapia R."/>
            <person name="Gilna P."/>
            <person name="Schmutz J."/>
            <person name="Larimer F."/>
            <person name="Land M."/>
            <person name="Hauser L."/>
            <person name="Kyrpides N."/>
            <person name="Kim E."/>
            <person name="Stahl D."/>
            <person name="Richardson P."/>
        </authorList>
    </citation>
    <scope>NUCLEOTIDE SEQUENCE [LARGE SCALE GENOMIC DNA]</scope>
    <source>
        <strain>AAC00-1</strain>
    </source>
</reference>
<protein>
    <recommendedName>
        <fullName evidence="2">NADH-quinone oxidoreductase subunit B</fullName>
        <ecNumber evidence="2">7.1.1.-</ecNumber>
    </recommendedName>
    <alternativeName>
        <fullName evidence="2">NADH dehydrogenase I subunit B</fullName>
    </alternativeName>
    <alternativeName>
        <fullName evidence="2">NDH-1 subunit B</fullName>
    </alternativeName>
</protein>
<organism>
    <name type="scientific">Paracidovorax citrulli (strain AAC00-1)</name>
    <name type="common">Acidovorax citrulli</name>
    <dbReference type="NCBI Taxonomy" id="397945"/>
    <lineage>
        <taxon>Bacteria</taxon>
        <taxon>Pseudomonadati</taxon>
        <taxon>Pseudomonadota</taxon>
        <taxon>Betaproteobacteria</taxon>
        <taxon>Burkholderiales</taxon>
        <taxon>Comamonadaceae</taxon>
        <taxon>Paracidovorax</taxon>
    </lineage>
</organism>
<comment type="function">
    <text evidence="1">NDH-1 shuttles electrons from NADH, via FMN and iron-sulfur (Fe-S) centers, to quinones in the respiratory chain. Couples the redox reaction to proton translocation (for every two electrons transferred, four hydrogen ions are translocated across the cytoplasmic membrane), and thus conserves the redox energy in a proton gradient (By similarity).</text>
</comment>
<comment type="catalytic activity">
    <reaction evidence="2">
        <text>a quinone + NADH + 5 H(+)(in) = a quinol + NAD(+) + 4 H(+)(out)</text>
        <dbReference type="Rhea" id="RHEA:57888"/>
        <dbReference type="ChEBI" id="CHEBI:15378"/>
        <dbReference type="ChEBI" id="CHEBI:24646"/>
        <dbReference type="ChEBI" id="CHEBI:57540"/>
        <dbReference type="ChEBI" id="CHEBI:57945"/>
        <dbReference type="ChEBI" id="CHEBI:132124"/>
    </reaction>
</comment>
<comment type="cofactor">
    <cofactor evidence="2">
        <name>[4Fe-4S] cluster</name>
        <dbReference type="ChEBI" id="CHEBI:49883"/>
    </cofactor>
    <text evidence="2">Binds 1 [4Fe-4S] cluster.</text>
</comment>
<comment type="subunit">
    <text evidence="2">NDH-1 is composed of 14 different subunits. Subunits NuoB, C, D, E, F, and G constitute the peripheral sector of the complex.</text>
</comment>
<comment type="subcellular location">
    <subcellularLocation>
        <location evidence="2">Cell inner membrane</location>
        <topology evidence="2">Peripheral membrane protein</topology>
        <orientation evidence="2">Cytoplasmic side</orientation>
    </subcellularLocation>
</comment>
<comment type="similarity">
    <text evidence="2">Belongs to the complex I 20 kDa subunit family.</text>
</comment>